<dbReference type="EMBL" id="AE004439">
    <property type="protein sequence ID" value="AAK02132.1"/>
    <property type="molecule type" value="Genomic_DNA"/>
</dbReference>
<dbReference type="RefSeq" id="WP_005724453.1">
    <property type="nucleotide sequence ID" value="NC_002663.1"/>
</dbReference>
<dbReference type="SMR" id="Q9CPJ0"/>
<dbReference type="STRING" id="272843.PM0048"/>
<dbReference type="EnsemblBacteria" id="AAK02132">
    <property type="protein sequence ID" value="AAK02132"/>
    <property type="gene ID" value="PM0048"/>
</dbReference>
<dbReference type="KEGG" id="pmu:PM0048"/>
<dbReference type="HOGENOM" id="CLU_017584_9_4_6"/>
<dbReference type="OrthoDB" id="5683977at2"/>
<dbReference type="Proteomes" id="UP000000809">
    <property type="component" value="Chromosome"/>
</dbReference>
<dbReference type="GO" id="GO:0005737">
    <property type="term" value="C:cytoplasm"/>
    <property type="evidence" value="ECO:0007669"/>
    <property type="project" value="UniProtKB-SubCell"/>
</dbReference>
<dbReference type="GO" id="GO:0003677">
    <property type="term" value="F:DNA binding"/>
    <property type="evidence" value="ECO:0007669"/>
    <property type="project" value="UniProtKB-KW"/>
</dbReference>
<dbReference type="GO" id="GO:0003700">
    <property type="term" value="F:DNA-binding transcription factor activity"/>
    <property type="evidence" value="ECO:0007669"/>
    <property type="project" value="UniProtKB-UniRule"/>
</dbReference>
<dbReference type="GO" id="GO:0000062">
    <property type="term" value="F:fatty-acyl-CoA binding"/>
    <property type="evidence" value="ECO:0007669"/>
    <property type="project" value="InterPro"/>
</dbReference>
<dbReference type="GO" id="GO:0006631">
    <property type="term" value="P:fatty acid metabolic process"/>
    <property type="evidence" value="ECO:0007669"/>
    <property type="project" value="UniProtKB-KW"/>
</dbReference>
<dbReference type="GO" id="GO:0019217">
    <property type="term" value="P:regulation of fatty acid metabolic process"/>
    <property type="evidence" value="ECO:0007669"/>
    <property type="project" value="UniProtKB-UniRule"/>
</dbReference>
<dbReference type="CDD" id="cd07377">
    <property type="entry name" value="WHTH_GntR"/>
    <property type="match status" value="1"/>
</dbReference>
<dbReference type="Gene3D" id="1.20.120.530">
    <property type="entry name" value="GntR ligand-binding domain-like"/>
    <property type="match status" value="1"/>
</dbReference>
<dbReference type="Gene3D" id="1.10.10.10">
    <property type="entry name" value="Winged helix-like DNA-binding domain superfamily/Winged helix DNA-binding domain"/>
    <property type="match status" value="1"/>
</dbReference>
<dbReference type="HAMAP" id="MF_00696">
    <property type="entry name" value="HTH_FadR"/>
    <property type="match status" value="1"/>
</dbReference>
<dbReference type="InterPro" id="IPR014178">
    <property type="entry name" value="FA-response_TF_FadR"/>
</dbReference>
<dbReference type="InterPro" id="IPR028374">
    <property type="entry name" value="FadR_C"/>
</dbReference>
<dbReference type="InterPro" id="IPR008920">
    <property type="entry name" value="TF_FadR/GntR_C"/>
</dbReference>
<dbReference type="InterPro" id="IPR000524">
    <property type="entry name" value="Tscrpt_reg_HTH_GntR"/>
</dbReference>
<dbReference type="InterPro" id="IPR036388">
    <property type="entry name" value="WH-like_DNA-bd_sf"/>
</dbReference>
<dbReference type="InterPro" id="IPR036390">
    <property type="entry name" value="WH_DNA-bd_sf"/>
</dbReference>
<dbReference type="NCBIfam" id="TIGR02812">
    <property type="entry name" value="fadR_gamma"/>
    <property type="match status" value="1"/>
</dbReference>
<dbReference type="NCBIfam" id="NF003444">
    <property type="entry name" value="PRK04984.1"/>
    <property type="match status" value="1"/>
</dbReference>
<dbReference type="PANTHER" id="PTHR43537:SF52">
    <property type="entry name" value="FATTY ACID METABOLISM REGULATOR PROTEIN"/>
    <property type="match status" value="1"/>
</dbReference>
<dbReference type="PANTHER" id="PTHR43537">
    <property type="entry name" value="TRANSCRIPTIONAL REGULATOR, GNTR FAMILY"/>
    <property type="match status" value="1"/>
</dbReference>
<dbReference type="Pfam" id="PF07840">
    <property type="entry name" value="FadR_C"/>
    <property type="match status" value="1"/>
</dbReference>
<dbReference type="Pfam" id="PF00392">
    <property type="entry name" value="GntR"/>
    <property type="match status" value="1"/>
</dbReference>
<dbReference type="PRINTS" id="PR00035">
    <property type="entry name" value="HTHGNTR"/>
</dbReference>
<dbReference type="SMART" id="SM00345">
    <property type="entry name" value="HTH_GNTR"/>
    <property type="match status" value="1"/>
</dbReference>
<dbReference type="SUPFAM" id="SSF48008">
    <property type="entry name" value="GntR ligand-binding domain-like"/>
    <property type="match status" value="1"/>
</dbReference>
<dbReference type="SUPFAM" id="SSF46785">
    <property type="entry name" value="Winged helix' DNA-binding domain"/>
    <property type="match status" value="1"/>
</dbReference>
<dbReference type="PROSITE" id="PS50949">
    <property type="entry name" value="HTH_GNTR"/>
    <property type="match status" value="1"/>
</dbReference>
<feature type="chain" id="PRO_0000050630" description="Fatty acid metabolism regulator protein">
    <location>
        <begin position="1"/>
        <end position="241"/>
    </location>
</feature>
<feature type="domain" description="HTH gntR-type" evidence="1">
    <location>
        <begin position="11"/>
        <end position="79"/>
    </location>
</feature>
<feature type="DNA-binding region" description="H-T-H motif" evidence="1">
    <location>
        <begin position="39"/>
        <end position="58"/>
    </location>
</feature>
<protein>
    <recommendedName>
        <fullName evidence="1">Fatty acid metabolism regulator protein</fullName>
    </recommendedName>
</protein>
<sequence>MNNDQPLLKAQSPAGLAEEYIVRSIWNNHFPPGSDLPAERELAEKIGVTRTTLREVLQRLARDGWLNIQHGKPTKVNNIWETSGLNILEVLVRLDSTKLPSFISNILSARTNISAIYIQKAFKVEPQKSLEAFKDLDTLADTAEAYTNFDYDLFRKLAFASDNPVYGLILNSLKGLYTRVGLFYFANPSARELAKRFYLSLKTLCQTQQVNDVKECIRQYGKDSGVIWANMQAYLPANFNE</sequence>
<comment type="function">
    <text evidence="1">Multifunctional regulator of fatty acid metabolism.</text>
</comment>
<comment type="subunit">
    <text evidence="1">Homodimer.</text>
</comment>
<comment type="subcellular location">
    <subcellularLocation>
        <location evidence="1">Cytoplasm</location>
    </subcellularLocation>
</comment>
<accession>Q9CPJ0</accession>
<proteinExistence type="inferred from homology"/>
<name>FADR_PASMU</name>
<organism>
    <name type="scientific">Pasteurella multocida (strain Pm70)</name>
    <dbReference type="NCBI Taxonomy" id="272843"/>
    <lineage>
        <taxon>Bacteria</taxon>
        <taxon>Pseudomonadati</taxon>
        <taxon>Pseudomonadota</taxon>
        <taxon>Gammaproteobacteria</taxon>
        <taxon>Pasteurellales</taxon>
        <taxon>Pasteurellaceae</taxon>
        <taxon>Pasteurella</taxon>
    </lineage>
</organism>
<keyword id="KW-0010">Activator</keyword>
<keyword id="KW-0963">Cytoplasm</keyword>
<keyword id="KW-0238">DNA-binding</keyword>
<keyword id="KW-0276">Fatty acid metabolism</keyword>
<keyword id="KW-0443">Lipid metabolism</keyword>
<keyword id="KW-1185">Reference proteome</keyword>
<keyword id="KW-0678">Repressor</keyword>
<keyword id="KW-0804">Transcription</keyword>
<keyword id="KW-0805">Transcription regulation</keyword>
<evidence type="ECO:0000255" key="1">
    <source>
        <dbReference type="HAMAP-Rule" id="MF_00696"/>
    </source>
</evidence>
<gene>
    <name evidence="1" type="primary">fadR</name>
    <name type="ordered locus">PM0048</name>
</gene>
<reference key="1">
    <citation type="journal article" date="2001" name="Proc. Natl. Acad. Sci. U.S.A.">
        <title>Complete genomic sequence of Pasteurella multocida Pm70.</title>
        <authorList>
            <person name="May B.J."/>
            <person name="Zhang Q."/>
            <person name="Li L.L."/>
            <person name="Paustian M.L."/>
            <person name="Whittam T.S."/>
            <person name="Kapur V."/>
        </authorList>
    </citation>
    <scope>NUCLEOTIDE SEQUENCE [LARGE SCALE GENOMIC DNA]</scope>
    <source>
        <strain>Pm70</strain>
    </source>
</reference>